<evidence type="ECO:0000255" key="1">
    <source>
        <dbReference type="HAMAP-Rule" id="MF_01888"/>
    </source>
</evidence>
<name>RRAB_PSEA6</name>
<proteinExistence type="inferred from homology"/>
<reference key="1">
    <citation type="submission" date="2006-06" db="EMBL/GenBank/DDBJ databases">
        <title>Complete sequence of Pseudoalteromonas atlantica T6c.</title>
        <authorList>
            <consortium name="US DOE Joint Genome Institute"/>
            <person name="Copeland A."/>
            <person name="Lucas S."/>
            <person name="Lapidus A."/>
            <person name="Barry K."/>
            <person name="Detter J.C."/>
            <person name="Glavina del Rio T."/>
            <person name="Hammon N."/>
            <person name="Israni S."/>
            <person name="Dalin E."/>
            <person name="Tice H."/>
            <person name="Pitluck S."/>
            <person name="Saunders E."/>
            <person name="Brettin T."/>
            <person name="Bruce D."/>
            <person name="Han C."/>
            <person name="Tapia R."/>
            <person name="Gilna P."/>
            <person name="Schmutz J."/>
            <person name="Larimer F."/>
            <person name="Land M."/>
            <person name="Hauser L."/>
            <person name="Kyrpides N."/>
            <person name="Kim E."/>
            <person name="Karls A.C."/>
            <person name="Bartlett D."/>
            <person name="Higgins B.P."/>
            <person name="Richardson P."/>
        </authorList>
    </citation>
    <scope>NUCLEOTIDE SEQUENCE [LARGE SCALE GENOMIC DNA]</scope>
    <source>
        <strain>T6c / ATCC BAA-1087</strain>
    </source>
</reference>
<accession>Q15X31</accession>
<comment type="function">
    <text evidence="1">Globally modulates RNA abundance by binding to RNase E (Rne) and regulating its endonucleolytic activity. Can modulate Rne action in a substrate-dependent manner by altering the composition of the degradosome.</text>
</comment>
<comment type="subunit">
    <text evidence="1">Interacts with the C-terminal region of Rne.</text>
</comment>
<comment type="subcellular location">
    <subcellularLocation>
        <location evidence="1">Cytoplasm</location>
    </subcellularLocation>
</comment>
<comment type="similarity">
    <text evidence="1">Belongs to the RraB family.</text>
</comment>
<keyword id="KW-0963">Cytoplasm</keyword>
<sequence length="117" mass="13079">MSTEEQAEWFEFNQETVEALIEDGSDSTKPHTIEYHFAGDDFDVLEKAAVDAFKAGFEVGDAEELMLDDGGTIFCFDAVVERLLDVDLINADTVKLLAIAQKQNVQFDGWGTYFIES</sequence>
<dbReference type="EMBL" id="CP000388">
    <property type="protein sequence ID" value="ABG39557.1"/>
    <property type="molecule type" value="Genomic_DNA"/>
</dbReference>
<dbReference type="RefSeq" id="WP_011573898.1">
    <property type="nucleotide sequence ID" value="NC_008228.1"/>
</dbReference>
<dbReference type="SMR" id="Q15X31"/>
<dbReference type="STRING" id="342610.Patl_1031"/>
<dbReference type="KEGG" id="pat:Patl_1031"/>
<dbReference type="eggNOG" id="COG3076">
    <property type="taxonomic scope" value="Bacteria"/>
</dbReference>
<dbReference type="HOGENOM" id="CLU_128640_0_0_6"/>
<dbReference type="OrthoDB" id="7065464at2"/>
<dbReference type="Proteomes" id="UP000001981">
    <property type="component" value="Chromosome"/>
</dbReference>
<dbReference type="GO" id="GO:0005737">
    <property type="term" value="C:cytoplasm"/>
    <property type="evidence" value="ECO:0007669"/>
    <property type="project" value="UniProtKB-SubCell"/>
</dbReference>
<dbReference type="GO" id="GO:0060698">
    <property type="term" value="F:endoribonuclease inhibitor activity"/>
    <property type="evidence" value="ECO:0007669"/>
    <property type="project" value="UniProtKB-UniRule"/>
</dbReference>
<dbReference type="GO" id="GO:0019899">
    <property type="term" value="F:enzyme binding"/>
    <property type="evidence" value="ECO:0007669"/>
    <property type="project" value="UniProtKB-UniRule"/>
</dbReference>
<dbReference type="Gene3D" id="3.30.70.970">
    <property type="entry name" value="RraB-like"/>
    <property type="match status" value="1"/>
</dbReference>
<dbReference type="HAMAP" id="MF_01888">
    <property type="entry name" value="RraB"/>
    <property type="match status" value="1"/>
</dbReference>
<dbReference type="InterPro" id="IPR016716">
    <property type="entry name" value="RraB"/>
</dbReference>
<dbReference type="InterPro" id="IPR036701">
    <property type="entry name" value="RraB-like_sf"/>
</dbReference>
<dbReference type="InterPro" id="IPR009671">
    <property type="entry name" value="RraB_dom"/>
</dbReference>
<dbReference type="NCBIfam" id="NF008393">
    <property type="entry name" value="PRK11191.1"/>
    <property type="match status" value="1"/>
</dbReference>
<dbReference type="Pfam" id="PF06877">
    <property type="entry name" value="RraB"/>
    <property type="match status" value="1"/>
</dbReference>
<dbReference type="PIRSF" id="PIRSF018193">
    <property type="entry name" value="UCP018193"/>
    <property type="match status" value="1"/>
</dbReference>
<dbReference type="SUPFAM" id="SSF89946">
    <property type="entry name" value="Hypothetical protein VC0424"/>
    <property type="match status" value="1"/>
</dbReference>
<gene>
    <name evidence="1" type="primary">rraB</name>
    <name type="ordered locus">Patl_1031</name>
</gene>
<feature type="chain" id="PRO_0000404312" description="Regulator of ribonuclease activity B">
    <location>
        <begin position="1"/>
        <end position="117"/>
    </location>
</feature>
<protein>
    <recommendedName>
        <fullName evidence="1">Regulator of ribonuclease activity B</fullName>
    </recommendedName>
</protein>
<organism>
    <name type="scientific">Pseudoalteromonas atlantica (strain T6c / ATCC BAA-1087)</name>
    <dbReference type="NCBI Taxonomy" id="3042615"/>
    <lineage>
        <taxon>Bacteria</taxon>
        <taxon>Pseudomonadati</taxon>
        <taxon>Pseudomonadota</taxon>
        <taxon>Gammaproteobacteria</taxon>
        <taxon>Alteromonadales</taxon>
        <taxon>Alteromonadaceae</taxon>
        <taxon>Paraglaciecola</taxon>
    </lineage>
</organism>